<geneLocation type="chloroplast"/>
<evidence type="ECO:0000255" key="1">
    <source>
        <dbReference type="HAMAP-Rule" id="MF_00382"/>
    </source>
</evidence>
<evidence type="ECO:0000305" key="2"/>
<dbReference type="EMBL" id="EF115542">
    <property type="protein sequence ID" value="ABK79519.1"/>
    <property type="molecule type" value="Genomic_DNA"/>
</dbReference>
<dbReference type="RefSeq" id="XP_002457869.1">
    <property type="nucleotide sequence ID" value="XM_002457824.1"/>
</dbReference>
<dbReference type="RefSeq" id="YP_899430.1">
    <property type="nucleotide sequence ID" value="NC_008602.1"/>
</dbReference>
<dbReference type="SMR" id="A1E9U7"/>
<dbReference type="FunCoup" id="A1E9U7">
    <property type="interactions" value="123"/>
</dbReference>
<dbReference type="STRING" id="4558.A1E9U7"/>
<dbReference type="GeneID" id="4549214"/>
<dbReference type="KEGG" id="sbi:4549214"/>
<dbReference type="eggNOG" id="KOG4707">
    <property type="taxonomic scope" value="Eukaryota"/>
</dbReference>
<dbReference type="HOGENOM" id="CLU_123265_0_1_1"/>
<dbReference type="InParanoid" id="A1E9U7"/>
<dbReference type="OrthoDB" id="512793at2759"/>
<dbReference type="Proteomes" id="UP000000768">
    <property type="component" value="Chloroplast"/>
</dbReference>
<dbReference type="ExpressionAtlas" id="A1E9U7">
    <property type="expression patterns" value="baseline"/>
</dbReference>
<dbReference type="GO" id="GO:0009507">
    <property type="term" value="C:chloroplast"/>
    <property type="evidence" value="ECO:0007669"/>
    <property type="project" value="UniProtKB-SubCell"/>
</dbReference>
<dbReference type="GO" id="GO:1990904">
    <property type="term" value="C:ribonucleoprotein complex"/>
    <property type="evidence" value="ECO:0007669"/>
    <property type="project" value="UniProtKB-KW"/>
</dbReference>
<dbReference type="GO" id="GO:0005840">
    <property type="term" value="C:ribosome"/>
    <property type="evidence" value="ECO:0007669"/>
    <property type="project" value="UniProtKB-KW"/>
</dbReference>
<dbReference type="GO" id="GO:0019843">
    <property type="term" value="F:rRNA binding"/>
    <property type="evidence" value="ECO:0007669"/>
    <property type="project" value="UniProtKB-UniRule"/>
</dbReference>
<dbReference type="GO" id="GO:0003735">
    <property type="term" value="F:structural constituent of ribosome"/>
    <property type="evidence" value="ECO:0000318"/>
    <property type="project" value="GO_Central"/>
</dbReference>
<dbReference type="GO" id="GO:0000027">
    <property type="term" value="P:ribosomal large subunit assembly"/>
    <property type="evidence" value="ECO:0007669"/>
    <property type="project" value="UniProtKB-UniRule"/>
</dbReference>
<dbReference type="GO" id="GO:0006412">
    <property type="term" value="P:translation"/>
    <property type="evidence" value="ECO:0007669"/>
    <property type="project" value="InterPro"/>
</dbReference>
<dbReference type="CDD" id="cd07026">
    <property type="entry name" value="Ribosomal_L20"/>
    <property type="match status" value="1"/>
</dbReference>
<dbReference type="FunFam" id="1.10.1900.20:FF:000002">
    <property type="entry name" value="50S ribosomal protein L20, chloroplastic"/>
    <property type="match status" value="1"/>
</dbReference>
<dbReference type="Gene3D" id="6.10.160.10">
    <property type="match status" value="1"/>
</dbReference>
<dbReference type="Gene3D" id="1.10.1900.20">
    <property type="entry name" value="Ribosomal protein L20"/>
    <property type="match status" value="1"/>
</dbReference>
<dbReference type="HAMAP" id="MF_00382">
    <property type="entry name" value="Ribosomal_bL20"/>
    <property type="match status" value="1"/>
</dbReference>
<dbReference type="InterPro" id="IPR005813">
    <property type="entry name" value="Ribosomal_bL20"/>
</dbReference>
<dbReference type="InterPro" id="IPR049946">
    <property type="entry name" value="RIBOSOMAL_L20_CS"/>
</dbReference>
<dbReference type="InterPro" id="IPR035566">
    <property type="entry name" value="Ribosomal_protein_bL20_C"/>
</dbReference>
<dbReference type="NCBIfam" id="TIGR01032">
    <property type="entry name" value="rplT_bact"/>
    <property type="match status" value="1"/>
</dbReference>
<dbReference type="PANTHER" id="PTHR10986">
    <property type="entry name" value="39S RIBOSOMAL PROTEIN L20"/>
    <property type="match status" value="1"/>
</dbReference>
<dbReference type="Pfam" id="PF00453">
    <property type="entry name" value="Ribosomal_L20"/>
    <property type="match status" value="1"/>
</dbReference>
<dbReference type="PRINTS" id="PR00062">
    <property type="entry name" value="RIBOSOMALL20"/>
</dbReference>
<dbReference type="SUPFAM" id="SSF74731">
    <property type="entry name" value="Ribosomal protein L20"/>
    <property type="match status" value="1"/>
</dbReference>
<dbReference type="PROSITE" id="PS00937">
    <property type="entry name" value="RIBOSOMAL_L20"/>
    <property type="match status" value="1"/>
</dbReference>
<name>RK20_SORBI</name>
<gene>
    <name evidence="1" type="primary">rpl20</name>
</gene>
<feature type="chain" id="PRO_0000276429" description="Large ribosomal subunit protein bL20c">
    <location>
        <begin position="1"/>
        <end position="119"/>
    </location>
</feature>
<keyword id="KW-0150">Chloroplast</keyword>
<keyword id="KW-0934">Plastid</keyword>
<keyword id="KW-1185">Reference proteome</keyword>
<keyword id="KW-0687">Ribonucleoprotein</keyword>
<keyword id="KW-0689">Ribosomal protein</keyword>
<keyword id="KW-0694">RNA-binding</keyword>
<keyword id="KW-0699">rRNA-binding</keyword>
<reference key="1">
    <citation type="journal article" date="2007" name="Theor. Appl. Genet.">
        <title>Complete chloroplast genome sequences of Hordeum vulgare, Sorghum bicolor and Agrostis stolonifera, and comparative analyses with other grass genomes.</title>
        <authorList>
            <person name="Saski C."/>
            <person name="Lee S.-B."/>
            <person name="Fjellheim S."/>
            <person name="Guda C."/>
            <person name="Jansen R.K."/>
            <person name="Luo H."/>
            <person name="Tomkins J."/>
            <person name="Rognli O.A."/>
            <person name="Daniell H."/>
            <person name="Clarke J.L."/>
        </authorList>
    </citation>
    <scope>NUCLEOTIDE SEQUENCE [LARGE SCALE GENOMIC DNA]</scope>
    <source>
        <strain>cv. BTx623</strain>
    </source>
</reference>
<organism>
    <name type="scientific">Sorghum bicolor</name>
    <name type="common">Sorghum</name>
    <name type="synonym">Sorghum vulgare</name>
    <dbReference type="NCBI Taxonomy" id="4558"/>
    <lineage>
        <taxon>Eukaryota</taxon>
        <taxon>Viridiplantae</taxon>
        <taxon>Streptophyta</taxon>
        <taxon>Embryophyta</taxon>
        <taxon>Tracheophyta</taxon>
        <taxon>Spermatophyta</taxon>
        <taxon>Magnoliopsida</taxon>
        <taxon>Liliopsida</taxon>
        <taxon>Poales</taxon>
        <taxon>Poaceae</taxon>
        <taxon>PACMAD clade</taxon>
        <taxon>Panicoideae</taxon>
        <taxon>Andropogonodae</taxon>
        <taxon>Andropogoneae</taxon>
        <taxon>Sorghinae</taxon>
        <taxon>Sorghum</taxon>
    </lineage>
</organism>
<comment type="function">
    <text evidence="1">Binds directly to 23S ribosomal RNA and is necessary for the in vitro assembly process of the 50S ribosomal subunit. It is not involved in the protein synthesizing functions of that subunit.</text>
</comment>
<comment type="subcellular location">
    <subcellularLocation>
        <location>Plastid</location>
        <location>Chloroplast</location>
    </subcellularLocation>
</comment>
<comment type="similarity">
    <text evidence="1">Belongs to the bacterial ribosomal protein bL20 family.</text>
</comment>
<proteinExistence type="inferred from homology"/>
<sequence length="119" mass="14260">MTRVPRGYIARRRRTKMRSFASNFRGAHLRLNRMITQQVRRAFVSSHRDRGRQKRDFRRLWITRINAATRVYNVFNSYSKLIHNLSKKELILNRKMLAQVAVSNPNNLYTISNKIRTIN</sequence>
<protein>
    <recommendedName>
        <fullName evidence="1">Large ribosomal subunit protein bL20c</fullName>
    </recommendedName>
    <alternativeName>
        <fullName evidence="2">50S ribosomal protein L20, chloroplastic</fullName>
    </alternativeName>
</protein>
<accession>A1E9U7</accession>